<organism>
    <name type="scientific">Corynebacterium glutamicum (strain ATCC 13032 / DSM 20300 / JCM 1318 / BCRC 11384 / CCUG 27702 / LMG 3730 / NBRC 12168 / NCIMB 10025 / NRRL B-2784 / 534)</name>
    <dbReference type="NCBI Taxonomy" id="196627"/>
    <lineage>
        <taxon>Bacteria</taxon>
        <taxon>Bacillati</taxon>
        <taxon>Actinomycetota</taxon>
        <taxon>Actinomycetes</taxon>
        <taxon>Mycobacteriales</taxon>
        <taxon>Corynebacteriaceae</taxon>
        <taxon>Corynebacterium</taxon>
    </lineage>
</organism>
<accession>Q8NLY6</accession>
<sequence>MGRAVGIDLGTTNSVVSVLEGGEPVVIANAEGSRTTPSVVAFAKNGEVLVGQSAKNQAVTNVDRTIRSVKRHIGTDWSVAIDDKNYTSQEISARTLMKLKRDAEAYLGEDVTDAVITVPAYFEDSQRQATKEAGQIAGLNVLRIVNEPTAAALAYGLEKGEQEQTILVFDLGGGTFDVSLLEIGDGVVEVRATSGDNELGGDDWDQRIVDWLVEKFQSSNGIDLTKDKMALQRLREAAEKAKIELSSSQSANINLPYITVDADKNPLFLDETLSRAEFQRITQDLLARTKTPFNQVVKDAGVSVSEIDHVVLVGGSTRMPAVTELVKELTGGREPNKGVNPDEVVAVGAALQAGVLRGEVKDVLLLDVTPLSLGIETKGGVMTKLIERNTTIPTKRSETFTTAEDNQPSVQIQVFQGEREIATANKLLGSFELGGIAPAPRGVPQIEVTFDIDANGIVHVTAKDKGTGKENTITIQDGSGLSQDEIDRMIKDAEAHADEDKKRREEQEVRNNAESLVYQTRKFVEENSEKVSEDLKAKVEEAAKGVEEALKGEDLEAIKAAVEKLNTESQEMGKAIYEADAAAGATQADAGAEGAADDNVVDAEVVEDDAADNGEDKK</sequence>
<comment type="function">
    <text evidence="1">Acts as a chaperone.</text>
</comment>
<comment type="induction">
    <text evidence="1">By stress conditions e.g. heat shock.</text>
</comment>
<comment type="similarity">
    <text evidence="1">Belongs to the heat shock protein 70 family.</text>
</comment>
<evidence type="ECO:0000255" key="1">
    <source>
        <dbReference type="HAMAP-Rule" id="MF_00332"/>
    </source>
</evidence>
<name>DNAK_CORGL</name>
<dbReference type="EMBL" id="BA000036">
    <property type="protein sequence ID" value="BAC00194.1"/>
    <property type="molecule type" value="Genomic_DNA"/>
</dbReference>
<dbReference type="EMBL" id="BX927156">
    <property type="protein sequence ID" value="CAF20821.1"/>
    <property type="molecule type" value="Genomic_DNA"/>
</dbReference>
<dbReference type="RefSeq" id="NP_601992.1">
    <property type="nucleotide sequence ID" value="NC_003450.3"/>
</dbReference>
<dbReference type="RefSeq" id="WP_011015390.1">
    <property type="nucleotide sequence ID" value="NC_006958.1"/>
</dbReference>
<dbReference type="SMR" id="Q8NLY6"/>
<dbReference type="STRING" id="196627.cg3100"/>
<dbReference type="GeneID" id="1020743"/>
<dbReference type="KEGG" id="cgb:cg3100"/>
<dbReference type="KEGG" id="cgl:Cgl2800"/>
<dbReference type="PATRIC" id="fig|196627.13.peg.2732"/>
<dbReference type="eggNOG" id="COG0443">
    <property type="taxonomic scope" value="Bacteria"/>
</dbReference>
<dbReference type="HOGENOM" id="CLU_005965_2_4_11"/>
<dbReference type="OrthoDB" id="9766019at2"/>
<dbReference type="BioCyc" id="CORYNE:G18NG-12417-MONOMER"/>
<dbReference type="Proteomes" id="UP000000582">
    <property type="component" value="Chromosome"/>
</dbReference>
<dbReference type="Proteomes" id="UP000001009">
    <property type="component" value="Chromosome"/>
</dbReference>
<dbReference type="GO" id="GO:0005524">
    <property type="term" value="F:ATP binding"/>
    <property type="evidence" value="ECO:0007669"/>
    <property type="project" value="UniProtKB-UniRule"/>
</dbReference>
<dbReference type="GO" id="GO:0140662">
    <property type="term" value="F:ATP-dependent protein folding chaperone"/>
    <property type="evidence" value="ECO:0007669"/>
    <property type="project" value="InterPro"/>
</dbReference>
<dbReference type="GO" id="GO:0051082">
    <property type="term" value="F:unfolded protein binding"/>
    <property type="evidence" value="ECO:0007669"/>
    <property type="project" value="InterPro"/>
</dbReference>
<dbReference type="CDD" id="cd10234">
    <property type="entry name" value="ASKHA_NBD_HSP70_DnaK-like"/>
    <property type="match status" value="1"/>
</dbReference>
<dbReference type="FunFam" id="2.60.34.10:FF:000014">
    <property type="entry name" value="Chaperone protein DnaK HSP70"/>
    <property type="match status" value="1"/>
</dbReference>
<dbReference type="FunFam" id="1.20.1270.10:FF:000001">
    <property type="entry name" value="Molecular chaperone DnaK"/>
    <property type="match status" value="1"/>
</dbReference>
<dbReference type="FunFam" id="3.30.420.40:FF:000071">
    <property type="entry name" value="Molecular chaperone DnaK"/>
    <property type="match status" value="1"/>
</dbReference>
<dbReference type="FunFam" id="3.90.640.10:FF:000003">
    <property type="entry name" value="Molecular chaperone DnaK"/>
    <property type="match status" value="1"/>
</dbReference>
<dbReference type="Gene3D" id="1.20.1270.10">
    <property type="match status" value="1"/>
</dbReference>
<dbReference type="Gene3D" id="3.30.420.40">
    <property type="match status" value="2"/>
</dbReference>
<dbReference type="Gene3D" id="3.90.640.10">
    <property type="entry name" value="Actin, Chain A, domain 4"/>
    <property type="match status" value="1"/>
</dbReference>
<dbReference type="Gene3D" id="2.60.34.10">
    <property type="entry name" value="Substrate Binding Domain Of DNAk, Chain A, domain 1"/>
    <property type="match status" value="1"/>
</dbReference>
<dbReference type="HAMAP" id="MF_00332">
    <property type="entry name" value="DnaK"/>
    <property type="match status" value="1"/>
</dbReference>
<dbReference type="InterPro" id="IPR043129">
    <property type="entry name" value="ATPase_NBD"/>
</dbReference>
<dbReference type="InterPro" id="IPR012725">
    <property type="entry name" value="Chaperone_DnaK"/>
</dbReference>
<dbReference type="InterPro" id="IPR018181">
    <property type="entry name" value="Heat_shock_70_CS"/>
</dbReference>
<dbReference type="InterPro" id="IPR029048">
    <property type="entry name" value="HSP70_C_sf"/>
</dbReference>
<dbReference type="InterPro" id="IPR029047">
    <property type="entry name" value="HSP70_peptide-bd_sf"/>
</dbReference>
<dbReference type="InterPro" id="IPR013126">
    <property type="entry name" value="Hsp_70_fam"/>
</dbReference>
<dbReference type="NCBIfam" id="NF001413">
    <property type="entry name" value="PRK00290.1"/>
    <property type="match status" value="1"/>
</dbReference>
<dbReference type="NCBIfam" id="TIGR02350">
    <property type="entry name" value="prok_dnaK"/>
    <property type="match status" value="1"/>
</dbReference>
<dbReference type="PANTHER" id="PTHR19375">
    <property type="entry name" value="HEAT SHOCK PROTEIN 70KDA"/>
    <property type="match status" value="1"/>
</dbReference>
<dbReference type="Pfam" id="PF00012">
    <property type="entry name" value="HSP70"/>
    <property type="match status" value="2"/>
</dbReference>
<dbReference type="PRINTS" id="PR00301">
    <property type="entry name" value="HEATSHOCK70"/>
</dbReference>
<dbReference type="SUPFAM" id="SSF53067">
    <property type="entry name" value="Actin-like ATPase domain"/>
    <property type="match status" value="2"/>
</dbReference>
<dbReference type="SUPFAM" id="SSF100934">
    <property type="entry name" value="Heat shock protein 70kD (HSP70), C-terminal subdomain"/>
    <property type="match status" value="1"/>
</dbReference>
<dbReference type="SUPFAM" id="SSF100920">
    <property type="entry name" value="Heat shock protein 70kD (HSP70), peptide-binding domain"/>
    <property type="match status" value="1"/>
</dbReference>
<dbReference type="PROSITE" id="PS00297">
    <property type="entry name" value="HSP70_1"/>
    <property type="match status" value="1"/>
</dbReference>
<dbReference type="PROSITE" id="PS00329">
    <property type="entry name" value="HSP70_2"/>
    <property type="match status" value="1"/>
</dbReference>
<dbReference type="PROSITE" id="PS01036">
    <property type="entry name" value="HSP70_3"/>
    <property type="match status" value="1"/>
</dbReference>
<gene>
    <name evidence="1" type="primary">dnaK</name>
    <name type="ordered locus">Cgl2800</name>
    <name type="ordered locus">cg3100</name>
</gene>
<protein>
    <recommendedName>
        <fullName evidence="1">Chaperone protein DnaK</fullName>
    </recommendedName>
    <alternativeName>
        <fullName evidence="1">HSP70</fullName>
    </alternativeName>
    <alternativeName>
        <fullName evidence="1">Heat shock 70 kDa protein</fullName>
    </alternativeName>
    <alternativeName>
        <fullName evidence="1">Heat shock protein 70</fullName>
    </alternativeName>
</protein>
<proteinExistence type="inferred from homology"/>
<keyword id="KW-0067">ATP-binding</keyword>
<keyword id="KW-0143">Chaperone</keyword>
<keyword id="KW-0547">Nucleotide-binding</keyword>
<keyword id="KW-0597">Phosphoprotein</keyword>
<keyword id="KW-1185">Reference proteome</keyword>
<keyword id="KW-0346">Stress response</keyword>
<reference key="1">
    <citation type="journal article" date="2003" name="Appl. Microbiol. Biotechnol.">
        <title>The Corynebacterium glutamicum genome: features and impacts on biotechnological processes.</title>
        <authorList>
            <person name="Ikeda M."/>
            <person name="Nakagawa S."/>
        </authorList>
    </citation>
    <scope>NUCLEOTIDE SEQUENCE [LARGE SCALE GENOMIC DNA]</scope>
    <source>
        <strain>ATCC 13032 / DSM 20300 / JCM 1318 / BCRC 11384 / CCUG 27702 / LMG 3730 / NBRC 12168 / NCIMB 10025 / NRRL B-2784 / 534</strain>
    </source>
</reference>
<reference key="2">
    <citation type="journal article" date="2003" name="J. Biotechnol.">
        <title>The complete Corynebacterium glutamicum ATCC 13032 genome sequence and its impact on the production of L-aspartate-derived amino acids and vitamins.</title>
        <authorList>
            <person name="Kalinowski J."/>
            <person name="Bathe B."/>
            <person name="Bartels D."/>
            <person name="Bischoff N."/>
            <person name="Bott M."/>
            <person name="Burkovski A."/>
            <person name="Dusch N."/>
            <person name="Eggeling L."/>
            <person name="Eikmanns B.J."/>
            <person name="Gaigalat L."/>
            <person name="Goesmann A."/>
            <person name="Hartmann M."/>
            <person name="Huthmacher K."/>
            <person name="Kraemer R."/>
            <person name="Linke B."/>
            <person name="McHardy A.C."/>
            <person name="Meyer F."/>
            <person name="Moeckel B."/>
            <person name="Pfefferle W."/>
            <person name="Puehler A."/>
            <person name="Rey D.A."/>
            <person name="Rueckert C."/>
            <person name="Rupp O."/>
            <person name="Sahm H."/>
            <person name="Wendisch V.F."/>
            <person name="Wiegraebe I."/>
            <person name="Tauch A."/>
        </authorList>
    </citation>
    <scope>NUCLEOTIDE SEQUENCE [LARGE SCALE GENOMIC DNA]</scope>
    <source>
        <strain>ATCC 13032 / DSM 20300 / JCM 1318 / BCRC 11384 / CCUG 27702 / LMG 3730 / NBRC 12168 / NCIMB 10025 / NRRL B-2784 / 534</strain>
    </source>
</reference>
<feature type="chain" id="PRO_0000078454" description="Chaperone protein DnaK">
    <location>
        <begin position="1"/>
        <end position="618"/>
    </location>
</feature>
<feature type="modified residue" description="Phosphothreonine; by autocatalysis" evidence="1">
    <location>
        <position position="175"/>
    </location>
</feature>